<name>AMPP3_BLAGS</name>
<accession>C5JQ04</accession>
<accession>A0A179UMV8</accession>
<proteinExistence type="inferred from homology"/>
<evidence type="ECO:0000250" key="1"/>
<evidence type="ECO:0000305" key="2"/>
<reference key="1">
    <citation type="journal article" date="2015" name="PLoS Genet.">
        <title>The dynamic genome and transcriptome of the human fungal pathogen Blastomyces and close relative Emmonsia.</title>
        <authorList>
            <person name="Munoz J.F."/>
            <person name="Gauthier G.M."/>
            <person name="Desjardins C.A."/>
            <person name="Gallo J.E."/>
            <person name="Holder J."/>
            <person name="Sullivan T.D."/>
            <person name="Marty A.J."/>
            <person name="Carmen J.C."/>
            <person name="Chen Z."/>
            <person name="Ding L."/>
            <person name="Gujja S."/>
            <person name="Magrini V."/>
            <person name="Misas E."/>
            <person name="Mitreva M."/>
            <person name="Priest M."/>
            <person name="Saif S."/>
            <person name="Whiston E.A."/>
            <person name="Young S."/>
            <person name="Zeng Q."/>
            <person name="Goldman W.E."/>
            <person name="Mardis E.R."/>
            <person name="Taylor J.W."/>
            <person name="McEwen J.G."/>
            <person name="Clay O.K."/>
            <person name="Klein B.S."/>
            <person name="Cuomo C.A."/>
        </authorList>
    </citation>
    <scope>NUCLEOTIDE SEQUENCE [LARGE SCALE GENOMIC DNA]</scope>
    <source>
        <strain>SLH14081</strain>
    </source>
</reference>
<organism>
    <name type="scientific">Blastomyces gilchristii (strain SLH14081)</name>
    <name type="common">Blastomyces dermatitidis</name>
    <dbReference type="NCBI Taxonomy" id="559298"/>
    <lineage>
        <taxon>Eukaryota</taxon>
        <taxon>Fungi</taxon>
        <taxon>Dikarya</taxon>
        <taxon>Ascomycota</taxon>
        <taxon>Pezizomycotina</taxon>
        <taxon>Eurotiomycetes</taxon>
        <taxon>Eurotiomycetidae</taxon>
        <taxon>Onygenales</taxon>
        <taxon>Ajellomycetaceae</taxon>
        <taxon>Blastomyces</taxon>
    </lineage>
</organism>
<keyword id="KW-0031">Aminopeptidase</keyword>
<keyword id="KW-0378">Hydrolase</keyword>
<keyword id="KW-0464">Manganese</keyword>
<keyword id="KW-0479">Metal-binding</keyword>
<keyword id="KW-0482">Metalloprotease</keyword>
<keyword id="KW-0645">Protease</keyword>
<keyword id="KW-1185">Reference proteome</keyword>
<dbReference type="EC" id="3.4.11.9"/>
<dbReference type="EMBL" id="GG657455">
    <property type="protein sequence ID" value="OAT08548.1"/>
    <property type="molecule type" value="Genomic_DNA"/>
</dbReference>
<dbReference type="RefSeq" id="XP_002624949.1">
    <property type="nucleotide sequence ID" value="XM_002624903.1"/>
</dbReference>
<dbReference type="SMR" id="C5JQ04"/>
<dbReference type="STRING" id="559298.C5JQ04"/>
<dbReference type="GeneID" id="8504593"/>
<dbReference type="KEGG" id="bgh:BDBG_04813"/>
<dbReference type="VEuPathDB" id="FungiDB:BDBG_04813"/>
<dbReference type="HOGENOM" id="CLU_017266_1_2_1"/>
<dbReference type="OrthoDB" id="10261878at2759"/>
<dbReference type="Proteomes" id="UP000002038">
    <property type="component" value="Unassembled WGS sequence"/>
</dbReference>
<dbReference type="GO" id="GO:0030145">
    <property type="term" value="F:manganese ion binding"/>
    <property type="evidence" value="ECO:0007669"/>
    <property type="project" value="InterPro"/>
</dbReference>
<dbReference type="GO" id="GO:0070006">
    <property type="term" value="F:metalloaminopeptidase activity"/>
    <property type="evidence" value="ECO:0007669"/>
    <property type="project" value="InterPro"/>
</dbReference>
<dbReference type="GO" id="GO:0006508">
    <property type="term" value="P:proteolysis"/>
    <property type="evidence" value="ECO:0007669"/>
    <property type="project" value="UniProtKB-KW"/>
</dbReference>
<dbReference type="CDD" id="cd01087">
    <property type="entry name" value="Prolidase"/>
    <property type="match status" value="1"/>
</dbReference>
<dbReference type="FunFam" id="3.90.230.10:FF:000002">
    <property type="entry name" value="Xaa-Pro aminopeptidase 3"/>
    <property type="match status" value="1"/>
</dbReference>
<dbReference type="Gene3D" id="3.90.230.10">
    <property type="entry name" value="Creatinase/methionine aminopeptidase superfamily"/>
    <property type="match status" value="1"/>
</dbReference>
<dbReference type="Gene3D" id="3.40.350.10">
    <property type="entry name" value="Creatinase/prolidase N-terminal domain"/>
    <property type="match status" value="1"/>
</dbReference>
<dbReference type="InterPro" id="IPR007865">
    <property type="entry name" value="Aminopep_P_N"/>
</dbReference>
<dbReference type="InterPro" id="IPR029149">
    <property type="entry name" value="Creatin/AminoP/Spt16_N"/>
</dbReference>
<dbReference type="InterPro" id="IPR036005">
    <property type="entry name" value="Creatinase/aminopeptidase-like"/>
</dbReference>
<dbReference type="InterPro" id="IPR000994">
    <property type="entry name" value="Pept_M24"/>
</dbReference>
<dbReference type="InterPro" id="IPR052433">
    <property type="entry name" value="X-Pro_dipept-like"/>
</dbReference>
<dbReference type="PANTHER" id="PTHR43226">
    <property type="entry name" value="XAA-PRO AMINOPEPTIDASE 3"/>
    <property type="match status" value="1"/>
</dbReference>
<dbReference type="PANTHER" id="PTHR43226:SF1">
    <property type="entry name" value="XAA-PRO DIPEPTIDASE"/>
    <property type="match status" value="1"/>
</dbReference>
<dbReference type="Pfam" id="PF05195">
    <property type="entry name" value="AMP_N"/>
    <property type="match status" value="1"/>
</dbReference>
<dbReference type="Pfam" id="PF00557">
    <property type="entry name" value="Peptidase_M24"/>
    <property type="match status" value="1"/>
</dbReference>
<dbReference type="SMART" id="SM01011">
    <property type="entry name" value="AMP_N"/>
    <property type="match status" value="1"/>
</dbReference>
<dbReference type="SUPFAM" id="SSF55920">
    <property type="entry name" value="Creatinase/aminopeptidase"/>
    <property type="match status" value="1"/>
</dbReference>
<dbReference type="SUPFAM" id="SSF53092">
    <property type="entry name" value="Creatinase/prolidase N-terminal domain"/>
    <property type="match status" value="1"/>
</dbReference>
<gene>
    <name type="primary">PEPP</name>
    <name type="ORF">BDBG_04813</name>
</gene>
<protein>
    <recommendedName>
        <fullName>Probable Xaa-Pro aminopeptidase PEPP</fullName>
        <ecNumber>3.4.11.9</ecNumber>
    </recommendedName>
    <alternativeName>
        <fullName>Aminoacylproline aminopeptidase</fullName>
    </alternativeName>
    <alternativeName>
        <fullName>Prolidase</fullName>
    </alternativeName>
</protein>
<sequence length="468" mass="52142">MDASVDKILAGKYPAKHHAKRVAARIRELGHGEAGVIYLESQKTRMIEDNDGEMPFRQRRNFFYLSGCPLPDSYLTYNIEEDHLTLFIPPIDEDSVIWSGLPLSPDEALELYDVDAVLSTADVNASLAHYCSAKEGTKVFAISDQVSPHITFLPFQETDFDVLKRAAEEARVVKDDYEIALLRRANEISSKAHVAVIKAAKSAMNERELEATFIATCMSYGCREQSYHPIFAGGTNGATLHYQKNDQDLVDKTTGEKKLNMLVDAGGEYRNYCADITRVFPLSGKFSAESRQIYDIVLEMQMTSLAMIKAGVMWEDVHSNSHRVAIRGLLKLGILRGTEQELFDKGISVAFFPHGLGHYLGMDTHDTGGNPNYEDKDSKFKYLRLRGVLACGGVVTVEPGLYFCRFIIDPYLASPELGKYIDANVLEKYWSVGGVRLEDNVVVTQNGYDNLTTAPKIPEEIEKLAAGP</sequence>
<comment type="function">
    <text evidence="1">Catalyzes the removal of a penultimate prolyl residue from the N-termini of peptides.</text>
</comment>
<comment type="catalytic activity">
    <reaction>
        <text>Release of any N-terminal amino acid, including proline, that is linked to proline, even from a dipeptide or tripeptide.</text>
        <dbReference type="EC" id="3.4.11.9"/>
    </reaction>
</comment>
<comment type="cofactor">
    <cofactor evidence="1">
        <name>Mn(2+)</name>
        <dbReference type="ChEBI" id="CHEBI:29035"/>
    </cofactor>
    <text evidence="1">Binds 2 manganese ions per subunit.</text>
</comment>
<comment type="similarity">
    <text evidence="2">Belongs to the peptidase M24B family.</text>
</comment>
<feature type="chain" id="PRO_0000411861" description="Probable Xaa-Pro aminopeptidase PEPP">
    <location>
        <begin position="1"/>
        <end position="468"/>
    </location>
</feature>
<feature type="binding site" evidence="1">
    <location>
        <position position="264"/>
    </location>
    <ligand>
        <name>Mn(2+)</name>
        <dbReference type="ChEBI" id="CHEBI:29035"/>
        <label>2</label>
    </ligand>
</feature>
<feature type="binding site" evidence="1">
    <location>
        <position position="275"/>
    </location>
    <ligand>
        <name>Mn(2+)</name>
        <dbReference type="ChEBI" id="CHEBI:29035"/>
        <label>1</label>
    </ligand>
</feature>
<feature type="binding site" evidence="1">
    <location>
        <position position="275"/>
    </location>
    <ligand>
        <name>Mn(2+)</name>
        <dbReference type="ChEBI" id="CHEBI:29035"/>
        <label>2</label>
    </ligand>
</feature>
<feature type="binding site" evidence="1">
    <location>
        <position position="398"/>
    </location>
    <ligand>
        <name>Mn(2+)</name>
        <dbReference type="ChEBI" id="CHEBI:29035"/>
        <label>1</label>
    </ligand>
</feature>
<feature type="binding site" evidence="1">
    <location>
        <position position="438"/>
    </location>
    <ligand>
        <name>Mn(2+)</name>
        <dbReference type="ChEBI" id="CHEBI:29035"/>
        <label>1</label>
    </ligand>
</feature>
<feature type="binding site" evidence="1">
    <location>
        <position position="438"/>
    </location>
    <ligand>
        <name>Mn(2+)</name>
        <dbReference type="ChEBI" id="CHEBI:29035"/>
        <label>2</label>
    </ligand>
</feature>